<reference key="1">
    <citation type="journal article" date="2004" name="Proc. Natl. Acad. Sci. U.S.A.">
        <title>Genome sequence of Picrophilus torridus and its implications for life around pH 0.</title>
        <authorList>
            <person name="Fuetterer O."/>
            <person name="Angelov A."/>
            <person name="Liesegang H."/>
            <person name="Gottschalk G."/>
            <person name="Schleper C."/>
            <person name="Schepers B."/>
            <person name="Dock C."/>
            <person name="Antranikian G."/>
            <person name="Liebl W."/>
        </authorList>
    </citation>
    <scope>NUCLEOTIDE SEQUENCE [LARGE SCALE GENOMIC DNA]</scope>
    <source>
        <strain>ATCC 700027 / DSM 9790 / JCM 10055 / NBRC 100828 / KAW 2/3</strain>
    </source>
</reference>
<organism>
    <name type="scientific">Picrophilus torridus (strain ATCC 700027 / DSM 9790 / JCM 10055 / NBRC 100828 / KAW 2/3)</name>
    <dbReference type="NCBI Taxonomy" id="1122961"/>
    <lineage>
        <taxon>Archaea</taxon>
        <taxon>Methanobacteriati</taxon>
        <taxon>Thermoplasmatota</taxon>
        <taxon>Thermoplasmata</taxon>
        <taxon>Thermoplasmatales</taxon>
        <taxon>Picrophilaceae</taxon>
        <taxon>Picrophilus</taxon>
    </lineage>
</organism>
<name>NADM_PICTO</name>
<gene>
    <name type="ordered locus">PTO0129</name>
</gene>
<proteinExistence type="inferred from homology"/>
<accession>Q6L2T8</accession>
<comment type="catalytic activity">
    <reaction evidence="1">
        <text>beta-nicotinamide D-ribonucleotide + ATP + H(+) = diphosphate + NAD(+)</text>
        <dbReference type="Rhea" id="RHEA:21360"/>
        <dbReference type="ChEBI" id="CHEBI:14649"/>
        <dbReference type="ChEBI" id="CHEBI:15378"/>
        <dbReference type="ChEBI" id="CHEBI:30616"/>
        <dbReference type="ChEBI" id="CHEBI:33019"/>
        <dbReference type="ChEBI" id="CHEBI:57540"/>
        <dbReference type="EC" id="2.7.7.1"/>
    </reaction>
</comment>
<comment type="pathway">
    <text evidence="1">Cofactor biosynthesis; NAD(+) biosynthesis; NAD(+) from nicotinamide D-ribonucleotide: step 1/1.</text>
</comment>
<comment type="subcellular location">
    <subcellularLocation>
        <location evidence="1">Cytoplasm</location>
    </subcellularLocation>
</comment>
<comment type="similarity">
    <text evidence="1">Belongs to the archaeal NMN adenylyltransferase family.</text>
</comment>
<keyword id="KW-0067">ATP-binding</keyword>
<keyword id="KW-0963">Cytoplasm</keyword>
<keyword id="KW-0520">NAD</keyword>
<keyword id="KW-0547">Nucleotide-binding</keyword>
<keyword id="KW-0548">Nucleotidyltransferase</keyword>
<keyword id="KW-0662">Pyridine nucleotide biosynthesis</keyword>
<keyword id="KW-0808">Transferase</keyword>
<dbReference type="EC" id="2.7.7.1" evidence="1"/>
<dbReference type="EMBL" id="AE017261">
    <property type="protein sequence ID" value="AAT42714.1"/>
    <property type="molecule type" value="Genomic_DNA"/>
</dbReference>
<dbReference type="RefSeq" id="WP_011176930.1">
    <property type="nucleotide sequence ID" value="NC_005877.1"/>
</dbReference>
<dbReference type="SMR" id="Q6L2T8"/>
<dbReference type="FunCoup" id="Q6L2T8">
    <property type="interactions" value="4"/>
</dbReference>
<dbReference type="STRING" id="263820.PTO0129"/>
<dbReference type="PaxDb" id="263820-PTO0129"/>
<dbReference type="GeneID" id="2845340"/>
<dbReference type="KEGG" id="pto:PTO0129"/>
<dbReference type="PATRIC" id="fig|263820.9.peg.142"/>
<dbReference type="eggNOG" id="arCOG00972">
    <property type="taxonomic scope" value="Archaea"/>
</dbReference>
<dbReference type="HOGENOM" id="CLU_108783_0_0_2"/>
<dbReference type="InParanoid" id="Q6L2T8"/>
<dbReference type="OrthoDB" id="264480at2157"/>
<dbReference type="UniPathway" id="UPA00253">
    <property type="reaction ID" value="UER00600"/>
</dbReference>
<dbReference type="Proteomes" id="UP000000438">
    <property type="component" value="Chromosome"/>
</dbReference>
<dbReference type="GO" id="GO:0005737">
    <property type="term" value="C:cytoplasm"/>
    <property type="evidence" value="ECO:0007669"/>
    <property type="project" value="UniProtKB-SubCell"/>
</dbReference>
<dbReference type="GO" id="GO:0005524">
    <property type="term" value="F:ATP binding"/>
    <property type="evidence" value="ECO:0007669"/>
    <property type="project" value="UniProtKB-KW"/>
</dbReference>
<dbReference type="GO" id="GO:0000309">
    <property type="term" value="F:nicotinamide-nucleotide adenylyltransferase activity"/>
    <property type="evidence" value="ECO:0007669"/>
    <property type="project" value="UniProtKB-UniRule"/>
</dbReference>
<dbReference type="GO" id="GO:0009435">
    <property type="term" value="P:NAD biosynthetic process"/>
    <property type="evidence" value="ECO:0007669"/>
    <property type="project" value="UniProtKB-UniRule"/>
</dbReference>
<dbReference type="CDD" id="cd02166">
    <property type="entry name" value="NMNAT_Archaea"/>
    <property type="match status" value="1"/>
</dbReference>
<dbReference type="Gene3D" id="3.40.50.620">
    <property type="entry name" value="HUPs"/>
    <property type="match status" value="1"/>
</dbReference>
<dbReference type="HAMAP" id="MF_00243">
    <property type="entry name" value="NMN_adenylyltr"/>
    <property type="match status" value="1"/>
</dbReference>
<dbReference type="InterPro" id="IPR004821">
    <property type="entry name" value="Cyt_trans-like"/>
</dbReference>
<dbReference type="InterPro" id="IPR006418">
    <property type="entry name" value="NMN_Atrans_arc"/>
</dbReference>
<dbReference type="InterPro" id="IPR014729">
    <property type="entry name" value="Rossmann-like_a/b/a_fold"/>
</dbReference>
<dbReference type="NCBIfam" id="TIGR01527">
    <property type="entry name" value="arch_NMN_Atrans"/>
    <property type="match status" value="1"/>
</dbReference>
<dbReference type="NCBIfam" id="TIGR00125">
    <property type="entry name" value="cyt_tran_rel"/>
    <property type="match status" value="1"/>
</dbReference>
<dbReference type="NCBIfam" id="NF002243">
    <property type="entry name" value="PRK01153.1"/>
    <property type="match status" value="1"/>
</dbReference>
<dbReference type="PANTHER" id="PTHR21342:SF0">
    <property type="entry name" value="BIFUNCTIONAL NMN ADENYLYLTRANSFERASE_NUDIX HYDROLASE"/>
    <property type="match status" value="1"/>
</dbReference>
<dbReference type="PANTHER" id="PTHR21342">
    <property type="entry name" value="PHOSPHOPANTETHEINE ADENYLYLTRANSFERASE"/>
    <property type="match status" value="1"/>
</dbReference>
<dbReference type="Pfam" id="PF01467">
    <property type="entry name" value="CTP_transf_like"/>
    <property type="match status" value="1"/>
</dbReference>
<dbReference type="SUPFAM" id="SSF52374">
    <property type="entry name" value="Nucleotidylyl transferase"/>
    <property type="match status" value="1"/>
</dbReference>
<evidence type="ECO:0000255" key="1">
    <source>
        <dbReference type="HAMAP-Rule" id="MF_00243"/>
    </source>
</evidence>
<feature type="chain" id="PRO_0000134997" description="Nicotinamide-nucleotide adenylyltransferase">
    <location>
        <begin position="1"/>
        <end position="169"/>
    </location>
</feature>
<protein>
    <recommendedName>
        <fullName evidence="1">Nicotinamide-nucleotide adenylyltransferase</fullName>
        <ecNumber evidence="1">2.7.7.1</ecNumber>
    </recommendedName>
    <alternativeName>
        <fullName evidence="1">NAD(+) diphosphorylase</fullName>
    </alternativeName>
    <alternativeName>
        <fullName evidence="1">NAD(+) pyrophosphorylase</fullName>
    </alternativeName>
    <alternativeName>
        <fullName evidence="1">NMN adenylyltransferase</fullName>
    </alternativeName>
</protein>
<sequence length="169" mass="19459">MRAFIVGRFQPFHNGHMEILKRILHENDSVIIGIGSAQFSHTLKDPFTAGERHLMISSALEESGVYNYYLVPIEDVNSNPLWVSHVESLTPPFQRVYTNNPLVKRLFYEKGYEVLSMDLLNRKEWSGTSIRNKMIRGENWKKDVPPAVARVIDEIDGVSRIRDLSESDE</sequence>